<dbReference type="EC" id="2.7.4.8"/>
<dbReference type="EMBL" id="U00089">
    <property type="protein sequence ID" value="AAB96234.1"/>
    <property type="molecule type" value="Genomic_DNA"/>
</dbReference>
<dbReference type="PIR" id="S73912">
    <property type="entry name" value="S73912"/>
</dbReference>
<dbReference type="RefSeq" id="NP_109934.1">
    <property type="nucleotide sequence ID" value="NC_000912.1"/>
</dbReference>
<dbReference type="RefSeq" id="WP_010874603.1">
    <property type="nucleotide sequence ID" value="NZ_OU342337.1"/>
</dbReference>
<dbReference type="SMR" id="P75526"/>
<dbReference type="IntAct" id="P75526">
    <property type="interactions" value="2"/>
</dbReference>
<dbReference type="STRING" id="272634.MPN_246"/>
<dbReference type="EnsemblBacteria" id="AAB96234">
    <property type="protein sequence ID" value="AAB96234"/>
    <property type="gene ID" value="MPN_246"/>
</dbReference>
<dbReference type="GeneID" id="66609108"/>
<dbReference type="KEGG" id="mpn:MPN_246"/>
<dbReference type="PATRIC" id="fig|272634.6.peg.265"/>
<dbReference type="HOGENOM" id="CLU_001715_1_1_14"/>
<dbReference type="OrthoDB" id="9808150at2"/>
<dbReference type="BioCyc" id="MPNE272634:G1GJ3-389-MONOMER"/>
<dbReference type="Proteomes" id="UP000000808">
    <property type="component" value="Chromosome"/>
</dbReference>
<dbReference type="GO" id="GO:0005829">
    <property type="term" value="C:cytosol"/>
    <property type="evidence" value="ECO:0007669"/>
    <property type="project" value="TreeGrafter"/>
</dbReference>
<dbReference type="GO" id="GO:0005524">
    <property type="term" value="F:ATP binding"/>
    <property type="evidence" value="ECO:0007669"/>
    <property type="project" value="UniProtKB-UniRule"/>
</dbReference>
<dbReference type="GO" id="GO:0004385">
    <property type="term" value="F:guanylate kinase activity"/>
    <property type="evidence" value="ECO:0007669"/>
    <property type="project" value="UniProtKB-UniRule"/>
</dbReference>
<dbReference type="CDD" id="cd00071">
    <property type="entry name" value="GMPK"/>
    <property type="match status" value="1"/>
</dbReference>
<dbReference type="FunFam" id="3.30.63.10:FF:000005">
    <property type="entry name" value="Guanylate kinase"/>
    <property type="match status" value="1"/>
</dbReference>
<dbReference type="Gene3D" id="3.30.63.10">
    <property type="entry name" value="Guanylate Kinase phosphate binding domain"/>
    <property type="match status" value="1"/>
</dbReference>
<dbReference type="Gene3D" id="3.40.50.300">
    <property type="entry name" value="P-loop containing nucleotide triphosphate hydrolases"/>
    <property type="match status" value="1"/>
</dbReference>
<dbReference type="HAMAP" id="MF_00328">
    <property type="entry name" value="Guanylate_kinase"/>
    <property type="match status" value="1"/>
</dbReference>
<dbReference type="InterPro" id="IPR008145">
    <property type="entry name" value="GK/Ca_channel_bsu"/>
</dbReference>
<dbReference type="InterPro" id="IPR008144">
    <property type="entry name" value="Guanylate_kin-like_dom"/>
</dbReference>
<dbReference type="InterPro" id="IPR017665">
    <property type="entry name" value="Guanylate_kinase"/>
</dbReference>
<dbReference type="InterPro" id="IPR020590">
    <property type="entry name" value="Guanylate_kinase_CS"/>
</dbReference>
<dbReference type="InterPro" id="IPR027417">
    <property type="entry name" value="P-loop_NTPase"/>
</dbReference>
<dbReference type="NCBIfam" id="TIGR03263">
    <property type="entry name" value="guanyl_kin"/>
    <property type="match status" value="1"/>
</dbReference>
<dbReference type="PANTHER" id="PTHR23117:SF13">
    <property type="entry name" value="GUANYLATE KINASE"/>
    <property type="match status" value="1"/>
</dbReference>
<dbReference type="PANTHER" id="PTHR23117">
    <property type="entry name" value="GUANYLATE KINASE-RELATED"/>
    <property type="match status" value="1"/>
</dbReference>
<dbReference type="Pfam" id="PF00625">
    <property type="entry name" value="Guanylate_kin"/>
    <property type="match status" value="1"/>
</dbReference>
<dbReference type="SMART" id="SM00072">
    <property type="entry name" value="GuKc"/>
    <property type="match status" value="1"/>
</dbReference>
<dbReference type="SUPFAM" id="SSF52540">
    <property type="entry name" value="P-loop containing nucleoside triphosphate hydrolases"/>
    <property type="match status" value="1"/>
</dbReference>
<dbReference type="PROSITE" id="PS00856">
    <property type="entry name" value="GUANYLATE_KINASE_1"/>
    <property type="match status" value="1"/>
</dbReference>
<dbReference type="PROSITE" id="PS50052">
    <property type="entry name" value="GUANYLATE_KINASE_2"/>
    <property type="match status" value="1"/>
</dbReference>
<feature type="chain" id="PRO_0000170568" description="Guanylate kinase">
    <location>
        <begin position="1"/>
        <end position="239"/>
    </location>
</feature>
<feature type="domain" description="Guanylate kinase-like">
    <location>
        <begin position="55"/>
        <end position="235"/>
    </location>
</feature>
<feature type="binding site" evidence="1">
    <location>
        <begin position="62"/>
        <end position="69"/>
    </location>
    <ligand>
        <name>ATP</name>
        <dbReference type="ChEBI" id="CHEBI:30616"/>
    </ligand>
</feature>
<reference key="1">
    <citation type="journal article" date="1996" name="Nucleic Acids Res.">
        <title>Complete sequence analysis of the genome of the bacterium Mycoplasma pneumoniae.</title>
        <authorList>
            <person name="Himmelreich R."/>
            <person name="Hilbert H."/>
            <person name="Plagens H."/>
            <person name="Pirkl E."/>
            <person name="Li B.-C."/>
            <person name="Herrmann R."/>
        </authorList>
    </citation>
    <scope>NUCLEOTIDE SEQUENCE [LARGE SCALE GENOMIC DNA]</scope>
    <source>
        <strain>ATCC 29342 / M129 / Subtype 1</strain>
    </source>
</reference>
<protein>
    <recommendedName>
        <fullName>Guanylate kinase</fullName>
        <ecNumber>2.7.4.8</ecNumber>
    </recommendedName>
    <alternativeName>
        <fullName>GMP kinase</fullName>
    </alternativeName>
</protein>
<sequence>MQSRLAWSKGNWTGLVGSLISLTSSSTSHALVGNNSILICGKIKIILNIEMVDTGRIFVITGPSGVGKSSLVRCLIDHFKDKLRYSISATTRKMRNSETEGVDYFFKDKAEFEKLIAADAFVEWAMYNDNYYGTLKSQAEQIIHNGGNLVLEIEYQGALQVKQKYPNDVVLIFIKPPSMEELLVRLKKRNDEDAITIQNRLKQAEKECQQIGHFKYVVTNNEFDKTLAELQAILLAEFN</sequence>
<name>KGUA_MYCPN</name>
<gene>
    <name type="primary">gmk</name>
    <name type="ordered locus">MPN_246</name>
    <name type="ORF">MP586</name>
</gene>
<organism>
    <name type="scientific">Mycoplasma pneumoniae (strain ATCC 29342 / M129 / Subtype 1)</name>
    <name type="common">Mycoplasmoides pneumoniae</name>
    <dbReference type="NCBI Taxonomy" id="272634"/>
    <lineage>
        <taxon>Bacteria</taxon>
        <taxon>Bacillati</taxon>
        <taxon>Mycoplasmatota</taxon>
        <taxon>Mycoplasmoidales</taxon>
        <taxon>Mycoplasmoidaceae</taxon>
        <taxon>Mycoplasmoides</taxon>
    </lineage>
</organism>
<evidence type="ECO:0000250" key="1"/>
<evidence type="ECO:0000305" key="2"/>
<comment type="function">
    <text evidence="1">Essential for recycling GMP and indirectly, cGMP.</text>
</comment>
<comment type="catalytic activity">
    <reaction>
        <text>GMP + ATP = GDP + ADP</text>
        <dbReference type="Rhea" id="RHEA:20780"/>
        <dbReference type="ChEBI" id="CHEBI:30616"/>
        <dbReference type="ChEBI" id="CHEBI:58115"/>
        <dbReference type="ChEBI" id="CHEBI:58189"/>
        <dbReference type="ChEBI" id="CHEBI:456216"/>
        <dbReference type="EC" id="2.7.4.8"/>
    </reaction>
</comment>
<comment type="subcellular location">
    <subcellularLocation>
        <location evidence="1">Cytoplasm</location>
    </subcellularLocation>
</comment>
<comment type="similarity">
    <text evidence="2">Belongs to the guanylate kinase family.</text>
</comment>
<proteinExistence type="inferred from homology"/>
<accession>P75526</accession>
<keyword id="KW-0067">ATP-binding</keyword>
<keyword id="KW-0963">Cytoplasm</keyword>
<keyword id="KW-0418">Kinase</keyword>
<keyword id="KW-0547">Nucleotide-binding</keyword>
<keyword id="KW-1185">Reference proteome</keyword>
<keyword id="KW-0808">Transferase</keyword>